<name>ATPE_XANOP</name>
<dbReference type="EMBL" id="CP000967">
    <property type="protein sequence ID" value="ACD61107.1"/>
    <property type="molecule type" value="Genomic_DNA"/>
</dbReference>
<dbReference type="RefSeq" id="WP_011257626.1">
    <property type="nucleotide sequence ID" value="NC_010717.2"/>
</dbReference>
<dbReference type="SMR" id="B2SQA9"/>
<dbReference type="KEGG" id="xop:PXO_03114"/>
<dbReference type="eggNOG" id="COG0355">
    <property type="taxonomic scope" value="Bacteria"/>
</dbReference>
<dbReference type="HOGENOM" id="CLU_084338_2_0_6"/>
<dbReference type="Proteomes" id="UP000001740">
    <property type="component" value="Chromosome"/>
</dbReference>
<dbReference type="GO" id="GO:0005886">
    <property type="term" value="C:plasma membrane"/>
    <property type="evidence" value="ECO:0007669"/>
    <property type="project" value="UniProtKB-SubCell"/>
</dbReference>
<dbReference type="GO" id="GO:0045259">
    <property type="term" value="C:proton-transporting ATP synthase complex"/>
    <property type="evidence" value="ECO:0007669"/>
    <property type="project" value="UniProtKB-KW"/>
</dbReference>
<dbReference type="GO" id="GO:0005524">
    <property type="term" value="F:ATP binding"/>
    <property type="evidence" value="ECO:0007669"/>
    <property type="project" value="UniProtKB-UniRule"/>
</dbReference>
<dbReference type="GO" id="GO:0046933">
    <property type="term" value="F:proton-transporting ATP synthase activity, rotational mechanism"/>
    <property type="evidence" value="ECO:0007669"/>
    <property type="project" value="UniProtKB-UniRule"/>
</dbReference>
<dbReference type="CDD" id="cd12152">
    <property type="entry name" value="F1-ATPase_delta"/>
    <property type="match status" value="1"/>
</dbReference>
<dbReference type="FunFam" id="2.60.15.10:FF:000001">
    <property type="entry name" value="ATP synthase epsilon chain"/>
    <property type="match status" value="1"/>
</dbReference>
<dbReference type="Gene3D" id="1.20.5.440">
    <property type="entry name" value="ATP synthase delta/epsilon subunit, C-terminal domain"/>
    <property type="match status" value="1"/>
</dbReference>
<dbReference type="Gene3D" id="2.60.15.10">
    <property type="entry name" value="F0F1 ATP synthase delta/epsilon subunit, N-terminal"/>
    <property type="match status" value="1"/>
</dbReference>
<dbReference type="HAMAP" id="MF_00530">
    <property type="entry name" value="ATP_synth_epsil_bac"/>
    <property type="match status" value="1"/>
</dbReference>
<dbReference type="InterPro" id="IPR036794">
    <property type="entry name" value="ATP_F1_dsu/esu_C_sf"/>
</dbReference>
<dbReference type="InterPro" id="IPR001469">
    <property type="entry name" value="ATP_synth_F1_dsu/esu"/>
</dbReference>
<dbReference type="InterPro" id="IPR020546">
    <property type="entry name" value="ATP_synth_F1_dsu/esu_N"/>
</dbReference>
<dbReference type="InterPro" id="IPR020547">
    <property type="entry name" value="ATP_synth_F1_esu_C"/>
</dbReference>
<dbReference type="InterPro" id="IPR036771">
    <property type="entry name" value="ATPsynth_dsu/esu_N"/>
</dbReference>
<dbReference type="NCBIfam" id="TIGR01216">
    <property type="entry name" value="ATP_synt_epsi"/>
    <property type="match status" value="1"/>
</dbReference>
<dbReference type="NCBIfam" id="NF001847">
    <property type="entry name" value="PRK00571.1-4"/>
    <property type="match status" value="1"/>
</dbReference>
<dbReference type="PANTHER" id="PTHR13822">
    <property type="entry name" value="ATP SYNTHASE DELTA/EPSILON CHAIN"/>
    <property type="match status" value="1"/>
</dbReference>
<dbReference type="PANTHER" id="PTHR13822:SF10">
    <property type="entry name" value="ATP SYNTHASE EPSILON CHAIN, CHLOROPLASTIC"/>
    <property type="match status" value="1"/>
</dbReference>
<dbReference type="Pfam" id="PF00401">
    <property type="entry name" value="ATP-synt_DE"/>
    <property type="match status" value="1"/>
</dbReference>
<dbReference type="Pfam" id="PF02823">
    <property type="entry name" value="ATP-synt_DE_N"/>
    <property type="match status" value="1"/>
</dbReference>
<dbReference type="SUPFAM" id="SSF46604">
    <property type="entry name" value="Epsilon subunit of F1F0-ATP synthase C-terminal domain"/>
    <property type="match status" value="1"/>
</dbReference>
<dbReference type="SUPFAM" id="SSF51344">
    <property type="entry name" value="Epsilon subunit of F1F0-ATP synthase N-terminal domain"/>
    <property type="match status" value="1"/>
</dbReference>
<protein>
    <recommendedName>
        <fullName evidence="1">ATP synthase epsilon chain</fullName>
    </recommendedName>
    <alternativeName>
        <fullName evidence="1">ATP synthase F1 sector epsilon subunit</fullName>
    </alternativeName>
    <alternativeName>
        <fullName evidence="1">F-ATPase epsilon subunit</fullName>
    </alternativeName>
</protein>
<keyword id="KW-0066">ATP synthesis</keyword>
<keyword id="KW-0997">Cell inner membrane</keyword>
<keyword id="KW-1003">Cell membrane</keyword>
<keyword id="KW-0139">CF(1)</keyword>
<keyword id="KW-0375">Hydrogen ion transport</keyword>
<keyword id="KW-0406">Ion transport</keyword>
<keyword id="KW-0472">Membrane</keyword>
<keyword id="KW-0813">Transport</keyword>
<reference key="1">
    <citation type="journal article" date="2008" name="BMC Genomics">
        <title>Genome sequence and rapid evolution of the rice pathogen Xanthomonas oryzae pv. oryzae PXO99A.</title>
        <authorList>
            <person name="Salzberg S.L."/>
            <person name="Sommer D.D."/>
            <person name="Schatz M.C."/>
            <person name="Phillippy A.M."/>
            <person name="Rabinowicz P.D."/>
            <person name="Tsuge S."/>
            <person name="Furutani A."/>
            <person name="Ochiai H."/>
            <person name="Delcher A.L."/>
            <person name="Kelley D."/>
            <person name="Madupu R."/>
            <person name="Puiu D."/>
            <person name="Radune D."/>
            <person name="Shumway M."/>
            <person name="Trapnell C."/>
            <person name="Aparna G."/>
            <person name="Jha G."/>
            <person name="Pandey A."/>
            <person name="Patil P.B."/>
            <person name="Ishihara H."/>
            <person name="Meyer D.F."/>
            <person name="Szurek B."/>
            <person name="Verdier V."/>
            <person name="Koebnik R."/>
            <person name="Dow J.M."/>
            <person name="Ryan R.P."/>
            <person name="Hirata H."/>
            <person name="Tsuyumu S."/>
            <person name="Won Lee S."/>
            <person name="Seo Y.-S."/>
            <person name="Sriariyanum M."/>
            <person name="Ronald P.C."/>
            <person name="Sonti R.V."/>
            <person name="Van Sluys M.-A."/>
            <person name="Leach J.E."/>
            <person name="White F.F."/>
            <person name="Bogdanove A.J."/>
        </authorList>
    </citation>
    <scope>NUCLEOTIDE SEQUENCE [LARGE SCALE GENOMIC DNA]</scope>
    <source>
        <strain>PXO99A</strain>
    </source>
</reference>
<gene>
    <name evidence="1" type="primary">atpC</name>
    <name type="ordered locus">PXO_03114</name>
</gene>
<sequence>MSTIRCDIVSAEKEIFHGEATLVVATGELGELGIAPKHAPLITRLKPGKVVVITANGEHLDFAISGGILEVQPQVVTILVDTAVRAQDIEEAAVRKVKEEAERLLANRGNTVDVAEAQRRLTEATVQLQALERLRRNLKH</sequence>
<accession>B2SQA9</accession>
<evidence type="ECO:0000255" key="1">
    <source>
        <dbReference type="HAMAP-Rule" id="MF_00530"/>
    </source>
</evidence>
<feature type="chain" id="PRO_1000127908" description="ATP synthase epsilon chain">
    <location>
        <begin position="1"/>
        <end position="140"/>
    </location>
</feature>
<comment type="function">
    <text evidence="1">Produces ATP from ADP in the presence of a proton gradient across the membrane.</text>
</comment>
<comment type="subunit">
    <text evidence="1">F-type ATPases have 2 components, CF(1) - the catalytic core - and CF(0) - the membrane proton channel. CF(1) has five subunits: alpha(3), beta(3), gamma(1), delta(1), epsilon(1). CF(0) has three main subunits: a, b and c.</text>
</comment>
<comment type="subcellular location">
    <subcellularLocation>
        <location evidence="1">Cell inner membrane</location>
        <topology evidence="1">Peripheral membrane protein</topology>
    </subcellularLocation>
</comment>
<comment type="similarity">
    <text evidence="1">Belongs to the ATPase epsilon chain family.</text>
</comment>
<organism>
    <name type="scientific">Xanthomonas oryzae pv. oryzae (strain PXO99A)</name>
    <dbReference type="NCBI Taxonomy" id="360094"/>
    <lineage>
        <taxon>Bacteria</taxon>
        <taxon>Pseudomonadati</taxon>
        <taxon>Pseudomonadota</taxon>
        <taxon>Gammaproteobacteria</taxon>
        <taxon>Lysobacterales</taxon>
        <taxon>Lysobacteraceae</taxon>
        <taxon>Xanthomonas</taxon>
    </lineage>
</organism>
<proteinExistence type="inferred from homology"/>